<accession>Q92665</accession>
<accession>B2RCS3</accession>
<accession>Q5VYC8</accession>
<accession>Q8WTV8</accession>
<comment type="subunit">
    <text evidence="4">Component of the mitochondrial small ribosomal subunit (mt-SSU). Mature mammalian 55S mitochondrial ribosomes consist of a small (28S) and a large (39S) subunit. The 28S small subunit contains a 12S ribosomal RNA (12S mt-rRNA) and 30 different proteins. The 39S large subunit contains a 16S rRNA (16S mt-rRNA), a copy of mitochondrial valine transfer RNA (mt-tRNA(Val)), which plays an integral structural role, and 52 different proteins.</text>
</comment>
<comment type="interaction">
    <interactant intactId="EBI-720602">
        <id>Q92665</id>
    </interactant>
    <interactant intactId="EBI-518675">
        <id>P40763</id>
        <label>STAT3</label>
    </interactant>
    <organismsDiffer>false</organismsDiffer>
    <experiments>2</experiments>
</comment>
<comment type="subcellular location">
    <subcellularLocation>
        <location evidence="3">Mitochondrion</location>
    </subcellularLocation>
</comment>
<comment type="similarity">
    <text evidence="7">Belongs to the mitochondrion-specific ribosomal protein mS31 family.</text>
</comment>
<proteinExistence type="evidence at protein level"/>
<evidence type="ECO:0000255" key="1"/>
<evidence type="ECO:0000256" key="2">
    <source>
        <dbReference type="SAM" id="MobiDB-lite"/>
    </source>
</evidence>
<evidence type="ECO:0000269" key="3">
    <source>
    </source>
</evidence>
<evidence type="ECO:0000269" key="4">
    <source>
    </source>
</evidence>
<evidence type="ECO:0000269" key="5">
    <source>
    </source>
</evidence>
<evidence type="ECO:0000303" key="6">
    <source>
    </source>
</evidence>
<evidence type="ECO:0000305" key="7"/>
<evidence type="ECO:0007829" key="8">
    <source>
        <dbReference type="PDB" id="8CSQ"/>
    </source>
</evidence>
<evidence type="ECO:0007829" key="9">
    <source>
        <dbReference type="PDB" id="8CSS"/>
    </source>
</evidence>
<evidence type="ECO:0007829" key="10">
    <source>
        <dbReference type="PDB" id="8CST"/>
    </source>
</evidence>
<evidence type="ECO:0007829" key="11">
    <source>
        <dbReference type="PDB" id="8QRL"/>
    </source>
</evidence>
<evidence type="ECO:0007829" key="12">
    <source>
        <dbReference type="PDB" id="8QRN"/>
    </source>
</evidence>
<name>RT31_HUMAN</name>
<protein>
    <recommendedName>
        <fullName evidence="6">Small ribosomal subunit protein mS31</fullName>
    </recommendedName>
    <alternativeName>
        <fullName>28S ribosomal protein S31, mitochondrial</fullName>
        <shortName>MRP-S31</shortName>
        <shortName>S31mt</shortName>
    </alternativeName>
    <alternativeName>
        <fullName>Imogen 38</fullName>
    </alternativeName>
</protein>
<sequence>MFPRVSTFLPLRPLSRHPLSSGSPETSAAAIMLLTVRHGTVRYRSSALLARTKNNIQRYFGTNSVICSKKDKQSVRTEETSKETSESQDSEKENTKKDLLGIIKGMKVELSTVNVRTTKPPKRRPLKSLEATLGRLRRATEYAPKKRIEPLSPELVAAASAVADSLPFDKQTTKSELLSQLQQHEEESRAQRDAKRPKISFSNIISDMKVARSATARVRSRPELRIQFDEGYDNYPGQEKTDDLKKRKNIFTGKRLNIFDMMAVTKEAPETDTSPSLWDVEFAKQLATVNEQPLQNGFEELIQWTKEGKLWEFPINNEAGFDDDGSEFHEHIFLEKHLESFPKQGPIRHFMELVTCGLSKNPYLSVKQKVEHIEWFRNYFNEKKDILKESNIQFN</sequence>
<keyword id="KW-0002">3D-structure</keyword>
<keyword id="KW-0496">Mitochondrion</keyword>
<keyword id="KW-1267">Proteomics identification</keyword>
<keyword id="KW-1185">Reference proteome</keyword>
<keyword id="KW-0687">Ribonucleoprotein</keyword>
<keyword id="KW-0689">Ribosomal protein</keyword>
<keyword id="KW-0809">Transit peptide</keyword>
<organism>
    <name type="scientific">Homo sapiens</name>
    <name type="common">Human</name>
    <dbReference type="NCBI Taxonomy" id="9606"/>
    <lineage>
        <taxon>Eukaryota</taxon>
        <taxon>Metazoa</taxon>
        <taxon>Chordata</taxon>
        <taxon>Craniata</taxon>
        <taxon>Vertebrata</taxon>
        <taxon>Euteleostomi</taxon>
        <taxon>Mammalia</taxon>
        <taxon>Eutheria</taxon>
        <taxon>Euarchontoglires</taxon>
        <taxon>Primates</taxon>
        <taxon>Haplorrhini</taxon>
        <taxon>Catarrhini</taxon>
        <taxon>Hominidae</taxon>
        <taxon>Homo</taxon>
    </lineage>
</organism>
<feature type="transit peptide" description="Mitochondrion" evidence="1">
    <location>
        <begin position="1"/>
        <end position="65"/>
    </location>
</feature>
<feature type="chain" id="PRO_0000030594" description="Small ribosomal subunit protein mS31">
    <location>
        <begin position="66"/>
        <end position="395"/>
    </location>
</feature>
<feature type="region of interest" description="Disordered" evidence="2">
    <location>
        <begin position="70"/>
        <end position="97"/>
    </location>
</feature>
<feature type="region of interest" description="Disordered" evidence="2">
    <location>
        <begin position="175"/>
        <end position="196"/>
    </location>
</feature>
<feature type="compositionally biased region" description="Basic and acidic residues" evidence="2">
    <location>
        <begin position="183"/>
        <end position="196"/>
    </location>
</feature>
<feature type="sequence variant" id="VAR_052049" description="In dbSNP:rs1854421.">
    <original>T</original>
    <variation>M</variation>
    <location>
        <position position="241"/>
    </location>
</feature>
<feature type="sequence variant" id="VAR_061812" description="In dbSNP:rs13508." evidence="5">
    <original>D</original>
    <variation>N</variation>
    <location>
        <position position="279"/>
    </location>
</feature>
<feature type="sequence conflict" description="In Ref. 5; AAH22045." evidence="7" ref="5">
    <original>T</original>
    <variation>I</variation>
    <location>
        <position position="80"/>
    </location>
</feature>
<feature type="sequence conflict" description="In Ref. 5; AAH22045." evidence="7" ref="5">
    <original>T</original>
    <variation>A</variation>
    <location>
        <position position="132"/>
    </location>
</feature>
<feature type="strand" evidence="12">
    <location>
        <begin position="250"/>
        <end position="253"/>
    </location>
</feature>
<feature type="strand" evidence="11">
    <location>
        <begin position="263"/>
        <end position="265"/>
    </location>
</feature>
<feature type="strand" evidence="12">
    <location>
        <begin position="271"/>
        <end position="273"/>
    </location>
</feature>
<feature type="helix" evidence="9">
    <location>
        <begin position="277"/>
        <end position="289"/>
    </location>
</feature>
<feature type="helix" evidence="9">
    <location>
        <begin position="297"/>
        <end position="307"/>
    </location>
</feature>
<feature type="turn" evidence="9">
    <location>
        <begin position="317"/>
        <end position="320"/>
    </location>
</feature>
<feature type="helix" evidence="9">
    <location>
        <begin position="323"/>
        <end position="325"/>
    </location>
</feature>
<feature type="helix" evidence="9">
    <location>
        <begin position="328"/>
        <end position="332"/>
    </location>
</feature>
<feature type="helix" evidence="9">
    <location>
        <begin position="335"/>
        <end position="338"/>
    </location>
</feature>
<feature type="strand" evidence="10">
    <location>
        <begin position="339"/>
        <end position="341"/>
    </location>
</feature>
<feature type="strand" evidence="9">
    <location>
        <begin position="343"/>
        <end position="345"/>
    </location>
</feature>
<feature type="helix" evidence="9">
    <location>
        <begin position="346"/>
        <end position="359"/>
    </location>
</feature>
<feature type="strand" evidence="8">
    <location>
        <begin position="362"/>
        <end position="364"/>
    </location>
</feature>
<feature type="helix" evidence="9">
    <location>
        <begin position="366"/>
        <end position="382"/>
    </location>
</feature>
<feature type="helix" evidence="12">
    <location>
        <begin position="384"/>
        <end position="389"/>
    </location>
</feature>
<dbReference type="EMBL" id="Z68747">
    <property type="protein sequence ID" value="CAA92951.1"/>
    <property type="molecule type" value="mRNA"/>
</dbReference>
<dbReference type="EMBL" id="AK315248">
    <property type="protein sequence ID" value="BAG37670.1"/>
    <property type="molecule type" value="mRNA"/>
</dbReference>
<dbReference type="EMBL" id="AL355132">
    <property type="status" value="NOT_ANNOTATED_CDS"/>
    <property type="molecule type" value="Genomic_DNA"/>
</dbReference>
<dbReference type="EMBL" id="AL161614">
    <property type="status" value="NOT_ANNOTATED_CDS"/>
    <property type="molecule type" value="Genomic_DNA"/>
</dbReference>
<dbReference type="EMBL" id="CH471075">
    <property type="protein sequence ID" value="EAX08629.1"/>
    <property type="molecule type" value="Genomic_DNA"/>
</dbReference>
<dbReference type="EMBL" id="BC022045">
    <property type="protein sequence ID" value="AAH22045.1"/>
    <property type="molecule type" value="mRNA"/>
</dbReference>
<dbReference type="CCDS" id="CCDS9372.1"/>
<dbReference type="RefSeq" id="NP_005821.2">
    <property type="nucleotide sequence ID" value="NM_005830.4"/>
</dbReference>
<dbReference type="PDB" id="3J9M">
    <property type="method" value="EM"/>
    <property type="resolution" value="3.50 A"/>
    <property type="chains" value="AY=1-395"/>
</dbReference>
<dbReference type="PDB" id="6NU2">
    <property type="method" value="EM"/>
    <property type="resolution" value="3.90 A"/>
    <property type="chains" value="AY=276-383"/>
</dbReference>
<dbReference type="PDB" id="6NU3">
    <property type="method" value="EM"/>
    <property type="resolution" value="4.40 A"/>
    <property type="chains" value="AY=1-395"/>
</dbReference>
<dbReference type="PDB" id="6RW4">
    <property type="method" value="EM"/>
    <property type="resolution" value="2.97 A"/>
    <property type="chains" value="Y=1-395"/>
</dbReference>
<dbReference type="PDB" id="6RW5">
    <property type="method" value="EM"/>
    <property type="resolution" value="3.14 A"/>
    <property type="chains" value="Y=1-395"/>
</dbReference>
<dbReference type="PDB" id="6VLZ">
    <property type="method" value="EM"/>
    <property type="resolution" value="2.97 A"/>
    <property type="chains" value="AY=1-395"/>
</dbReference>
<dbReference type="PDB" id="6VMI">
    <property type="method" value="EM"/>
    <property type="resolution" value="2.96 A"/>
    <property type="chains" value="AY=1-395"/>
</dbReference>
<dbReference type="PDB" id="6ZM5">
    <property type="method" value="EM"/>
    <property type="resolution" value="2.89 A"/>
    <property type="chains" value="AY=1-395"/>
</dbReference>
<dbReference type="PDB" id="6ZM6">
    <property type="method" value="EM"/>
    <property type="resolution" value="2.59 A"/>
    <property type="chains" value="AY=1-395"/>
</dbReference>
<dbReference type="PDB" id="6ZS9">
    <property type="method" value="EM"/>
    <property type="resolution" value="4.00 A"/>
    <property type="chains" value="AY=1-395"/>
</dbReference>
<dbReference type="PDB" id="6ZSA">
    <property type="method" value="EM"/>
    <property type="resolution" value="4.00 A"/>
    <property type="chains" value="AY=1-395"/>
</dbReference>
<dbReference type="PDB" id="6ZSB">
    <property type="method" value="EM"/>
    <property type="resolution" value="4.50 A"/>
    <property type="chains" value="AY=1-395"/>
</dbReference>
<dbReference type="PDB" id="6ZSC">
    <property type="method" value="EM"/>
    <property type="resolution" value="3.50 A"/>
    <property type="chains" value="AY=1-395"/>
</dbReference>
<dbReference type="PDB" id="6ZSD">
    <property type="method" value="EM"/>
    <property type="resolution" value="3.70 A"/>
    <property type="chains" value="AY=1-395"/>
</dbReference>
<dbReference type="PDB" id="6ZSE">
    <property type="method" value="EM"/>
    <property type="resolution" value="5.00 A"/>
    <property type="chains" value="AY=1-395"/>
</dbReference>
<dbReference type="PDB" id="6ZSG">
    <property type="method" value="EM"/>
    <property type="resolution" value="4.00 A"/>
    <property type="chains" value="AY=1-395"/>
</dbReference>
<dbReference type="PDB" id="7A5F">
    <property type="method" value="EM"/>
    <property type="resolution" value="4.40 A"/>
    <property type="chains" value="Y6=1-395"/>
</dbReference>
<dbReference type="PDB" id="7A5G">
    <property type="method" value="EM"/>
    <property type="resolution" value="4.33 A"/>
    <property type="chains" value="Y6=1-395"/>
</dbReference>
<dbReference type="PDB" id="7A5I">
    <property type="method" value="EM"/>
    <property type="resolution" value="3.70 A"/>
    <property type="chains" value="Y6=1-395"/>
</dbReference>
<dbReference type="PDB" id="7A5K">
    <property type="method" value="EM"/>
    <property type="resolution" value="3.70 A"/>
    <property type="chains" value="Y6=1-395"/>
</dbReference>
<dbReference type="PDB" id="7L08">
    <property type="method" value="EM"/>
    <property type="resolution" value="3.49 A"/>
    <property type="chains" value="AY=1-395"/>
</dbReference>
<dbReference type="PDB" id="7OG4">
    <property type="method" value="EM"/>
    <property type="resolution" value="3.80 A"/>
    <property type="chains" value="AY=1-395"/>
</dbReference>
<dbReference type="PDB" id="7P2E">
    <property type="method" value="EM"/>
    <property type="resolution" value="2.40 A"/>
    <property type="chains" value="Y=1-395"/>
</dbReference>
<dbReference type="PDB" id="7PNX">
    <property type="method" value="EM"/>
    <property type="resolution" value="2.76 A"/>
    <property type="chains" value="Y=1-395"/>
</dbReference>
<dbReference type="PDB" id="7PNY">
    <property type="method" value="EM"/>
    <property type="resolution" value="3.06 A"/>
    <property type="chains" value="Y=1-395"/>
</dbReference>
<dbReference type="PDB" id="7PNZ">
    <property type="method" value="EM"/>
    <property type="resolution" value="3.09 A"/>
    <property type="chains" value="Y=1-395"/>
</dbReference>
<dbReference type="PDB" id="7PO0">
    <property type="method" value="EM"/>
    <property type="resolution" value="2.90 A"/>
    <property type="chains" value="Y=1-395"/>
</dbReference>
<dbReference type="PDB" id="7PO1">
    <property type="method" value="EM"/>
    <property type="resolution" value="2.92 A"/>
    <property type="chains" value="Y=1-395"/>
</dbReference>
<dbReference type="PDB" id="7PO2">
    <property type="method" value="EM"/>
    <property type="resolution" value="3.09 A"/>
    <property type="chains" value="Y=1-395"/>
</dbReference>
<dbReference type="PDB" id="7PO3">
    <property type="method" value="EM"/>
    <property type="resolution" value="2.92 A"/>
    <property type="chains" value="Y=1-395"/>
</dbReference>
<dbReference type="PDB" id="7QI4">
    <property type="method" value="EM"/>
    <property type="resolution" value="2.21 A"/>
    <property type="chains" value="AY=1-395"/>
</dbReference>
<dbReference type="PDB" id="7QI5">
    <property type="method" value="EM"/>
    <property type="resolution" value="2.63 A"/>
    <property type="chains" value="AY=1-395"/>
</dbReference>
<dbReference type="PDB" id="7QI6">
    <property type="method" value="EM"/>
    <property type="resolution" value="2.98 A"/>
    <property type="chains" value="AY=1-395"/>
</dbReference>
<dbReference type="PDB" id="8ANY">
    <property type="method" value="EM"/>
    <property type="resolution" value="2.85 A"/>
    <property type="chains" value="AY=1-395"/>
</dbReference>
<dbReference type="PDB" id="8CSP">
    <property type="method" value="EM"/>
    <property type="resolution" value="2.66 A"/>
    <property type="chains" value="Y=1-395"/>
</dbReference>
<dbReference type="PDB" id="8CSQ">
    <property type="method" value="EM"/>
    <property type="resolution" value="2.54 A"/>
    <property type="chains" value="Y=1-395"/>
</dbReference>
<dbReference type="PDB" id="8CSR">
    <property type="method" value="EM"/>
    <property type="resolution" value="2.54 A"/>
    <property type="chains" value="Y=1-395"/>
</dbReference>
<dbReference type="PDB" id="8CSS">
    <property type="method" value="EM"/>
    <property type="resolution" value="2.36 A"/>
    <property type="chains" value="Y=1-395"/>
</dbReference>
<dbReference type="PDB" id="8CST">
    <property type="method" value="EM"/>
    <property type="resolution" value="2.85 A"/>
    <property type="chains" value="Y=1-395"/>
</dbReference>
<dbReference type="PDB" id="8CSU">
    <property type="method" value="EM"/>
    <property type="resolution" value="3.03 A"/>
    <property type="chains" value="Y=1-395"/>
</dbReference>
<dbReference type="PDB" id="8K2A">
    <property type="method" value="EM"/>
    <property type="resolution" value="2.90 A"/>
    <property type="chains" value="Sg=1-395"/>
</dbReference>
<dbReference type="PDB" id="8OIR">
    <property type="method" value="EM"/>
    <property type="resolution" value="3.10 A"/>
    <property type="chains" value="AY=1-395"/>
</dbReference>
<dbReference type="PDB" id="8OIS">
    <property type="method" value="EM"/>
    <property type="resolution" value="3.00 A"/>
    <property type="chains" value="AY=1-395"/>
</dbReference>
<dbReference type="PDB" id="8QRK">
    <property type="method" value="EM"/>
    <property type="resolution" value="6.69 A"/>
    <property type="chains" value="Y=1-395"/>
</dbReference>
<dbReference type="PDB" id="8QRL">
    <property type="method" value="EM"/>
    <property type="resolution" value="3.34 A"/>
    <property type="chains" value="Y=1-395"/>
</dbReference>
<dbReference type="PDB" id="8QRM">
    <property type="method" value="EM"/>
    <property type="resolution" value="3.05 A"/>
    <property type="chains" value="Y=1-395"/>
</dbReference>
<dbReference type="PDB" id="8QRN">
    <property type="method" value="EM"/>
    <property type="resolution" value="2.98 A"/>
    <property type="chains" value="Y=1-395"/>
</dbReference>
<dbReference type="PDB" id="8RRI">
    <property type="method" value="EM"/>
    <property type="resolution" value="2.40 A"/>
    <property type="chains" value="AY=1-395"/>
</dbReference>
<dbReference type="PDB" id="8XT0">
    <property type="method" value="EM"/>
    <property type="resolution" value="3.20 A"/>
    <property type="chains" value="Sg=1-395"/>
</dbReference>
<dbReference type="PDB" id="8XT2">
    <property type="method" value="EM"/>
    <property type="resolution" value="3.30 A"/>
    <property type="chains" value="Sg=1-395"/>
</dbReference>
<dbReference type="PDBsum" id="3J9M"/>
<dbReference type="PDBsum" id="6NU2"/>
<dbReference type="PDBsum" id="6NU3"/>
<dbReference type="PDBsum" id="6RW4"/>
<dbReference type="PDBsum" id="6RW5"/>
<dbReference type="PDBsum" id="6VLZ"/>
<dbReference type="PDBsum" id="6VMI"/>
<dbReference type="PDBsum" id="6ZM5"/>
<dbReference type="PDBsum" id="6ZM6"/>
<dbReference type="PDBsum" id="6ZS9"/>
<dbReference type="PDBsum" id="6ZSA"/>
<dbReference type="PDBsum" id="6ZSB"/>
<dbReference type="PDBsum" id="6ZSC"/>
<dbReference type="PDBsum" id="6ZSD"/>
<dbReference type="PDBsum" id="6ZSE"/>
<dbReference type="PDBsum" id="6ZSG"/>
<dbReference type="PDBsum" id="7A5F"/>
<dbReference type="PDBsum" id="7A5G"/>
<dbReference type="PDBsum" id="7A5I"/>
<dbReference type="PDBsum" id="7A5K"/>
<dbReference type="PDBsum" id="7L08"/>
<dbReference type="PDBsum" id="7OG4"/>
<dbReference type="PDBsum" id="7P2E"/>
<dbReference type="PDBsum" id="7PNX"/>
<dbReference type="PDBsum" id="7PNY"/>
<dbReference type="PDBsum" id="7PNZ"/>
<dbReference type="PDBsum" id="7PO0"/>
<dbReference type="PDBsum" id="7PO1"/>
<dbReference type="PDBsum" id="7PO2"/>
<dbReference type="PDBsum" id="7PO3"/>
<dbReference type="PDBsum" id="7QI4"/>
<dbReference type="PDBsum" id="7QI5"/>
<dbReference type="PDBsum" id="7QI6"/>
<dbReference type="PDBsum" id="8ANY"/>
<dbReference type="PDBsum" id="8CSP"/>
<dbReference type="PDBsum" id="8CSQ"/>
<dbReference type="PDBsum" id="8CSR"/>
<dbReference type="PDBsum" id="8CSS"/>
<dbReference type="PDBsum" id="8CST"/>
<dbReference type="PDBsum" id="8CSU"/>
<dbReference type="PDBsum" id="8K2A"/>
<dbReference type="PDBsum" id="8OIR"/>
<dbReference type="PDBsum" id="8OIS"/>
<dbReference type="PDBsum" id="8QRK"/>
<dbReference type="PDBsum" id="8QRL"/>
<dbReference type="PDBsum" id="8QRM"/>
<dbReference type="PDBsum" id="8QRN"/>
<dbReference type="PDBsum" id="8RRI"/>
<dbReference type="PDBsum" id="8XT0"/>
<dbReference type="PDBsum" id="8XT2"/>
<dbReference type="EMDB" id="EMD-0514"/>
<dbReference type="EMDB" id="EMD-0515"/>
<dbReference type="EMDB" id="EMD-10021"/>
<dbReference type="EMDB" id="EMD-10022"/>
<dbReference type="EMDB" id="EMD-11278"/>
<dbReference type="EMDB" id="EMD-11279"/>
<dbReference type="EMDB" id="EMD-11390"/>
<dbReference type="EMDB" id="EMD-11391"/>
<dbReference type="EMDB" id="EMD-11392"/>
<dbReference type="EMDB" id="EMD-11393"/>
<dbReference type="EMDB" id="EMD-11394"/>
<dbReference type="EMDB" id="EMD-11395"/>
<dbReference type="EMDB" id="EMD-11397"/>
<dbReference type="EMDB" id="EMD-11641"/>
<dbReference type="EMDB" id="EMD-11642"/>
<dbReference type="EMDB" id="EMD-11644"/>
<dbReference type="EMDB" id="EMD-11646"/>
<dbReference type="EMDB" id="EMD-12877"/>
<dbReference type="EMDB" id="EMD-13170"/>
<dbReference type="EMDB" id="EMD-13555"/>
<dbReference type="EMDB" id="EMD-13556"/>
<dbReference type="EMDB" id="EMD-13557"/>
<dbReference type="EMDB" id="EMD-13558"/>
<dbReference type="EMDB" id="EMD-13559"/>
<dbReference type="EMDB" id="EMD-13560"/>
<dbReference type="EMDB" id="EMD-13561"/>
<dbReference type="EMDB" id="EMD-13980"/>
<dbReference type="EMDB" id="EMD-13981"/>
<dbReference type="EMDB" id="EMD-13982"/>
<dbReference type="EMDB" id="EMD-15544"/>
<dbReference type="EMDB" id="EMD-16897"/>
<dbReference type="EMDB" id="EMD-16898"/>
<dbReference type="EMDB" id="EMD-19460"/>
<dbReference type="EMDB" id="EMD-21233"/>
<dbReference type="EMDB" id="EMD-21242"/>
<dbReference type="EMDB" id="EMD-23096"/>
<dbReference type="EMDB" id="EMD-26966"/>
<dbReference type="EMDB" id="EMD-26967"/>
<dbReference type="EMDB" id="EMD-26968"/>
<dbReference type="EMDB" id="EMD-26969"/>
<dbReference type="EMDB" id="EMD-26970"/>
<dbReference type="EMDB" id="EMD-26971"/>
<dbReference type="EMDB" id="EMD-36836"/>
<dbReference type="EMDB" id="EMD-38632"/>
<dbReference type="EMDB" id="EMD-38634"/>
<dbReference type="SMR" id="Q92665"/>
<dbReference type="BioGRID" id="115534">
    <property type="interactions" value="321"/>
</dbReference>
<dbReference type="ComplexPortal" id="CPX-5225">
    <property type="entry name" value="28S mitochondrial small ribosomal subunit"/>
</dbReference>
<dbReference type="CORUM" id="Q92665"/>
<dbReference type="FunCoup" id="Q92665">
    <property type="interactions" value="2221"/>
</dbReference>
<dbReference type="IntAct" id="Q92665">
    <property type="interactions" value="182"/>
</dbReference>
<dbReference type="MINT" id="Q92665"/>
<dbReference type="STRING" id="9606.ENSP00000315397"/>
<dbReference type="iPTMnet" id="Q92665"/>
<dbReference type="MetOSite" id="Q92665"/>
<dbReference type="PhosphoSitePlus" id="Q92665"/>
<dbReference type="SwissPalm" id="Q92665"/>
<dbReference type="BioMuta" id="MRPS31"/>
<dbReference type="DMDM" id="93186129"/>
<dbReference type="jPOST" id="Q92665"/>
<dbReference type="MassIVE" id="Q92665"/>
<dbReference type="PaxDb" id="9606-ENSP00000315397"/>
<dbReference type="PeptideAtlas" id="Q92665"/>
<dbReference type="ProteomicsDB" id="75398"/>
<dbReference type="Pumba" id="Q92665"/>
<dbReference type="Antibodypedia" id="23335">
    <property type="antibodies" value="160 antibodies from 27 providers"/>
</dbReference>
<dbReference type="DNASU" id="10240"/>
<dbReference type="Ensembl" id="ENST00000323563.8">
    <property type="protein sequence ID" value="ENSP00000315397.6"/>
    <property type="gene ID" value="ENSG00000102738.8"/>
</dbReference>
<dbReference type="GeneID" id="10240"/>
<dbReference type="KEGG" id="hsa:10240"/>
<dbReference type="MANE-Select" id="ENST00000323563.8">
    <property type="protein sequence ID" value="ENSP00000315397.6"/>
    <property type="RefSeq nucleotide sequence ID" value="NM_005830.4"/>
    <property type="RefSeq protein sequence ID" value="NP_005821.2"/>
</dbReference>
<dbReference type="UCSC" id="uc001uxm.5">
    <property type="organism name" value="human"/>
</dbReference>
<dbReference type="AGR" id="HGNC:16632"/>
<dbReference type="CTD" id="10240"/>
<dbReference type="DisGeNET" id="10240"/>
<dbReference type="GeneCards" id="MRPS31"/>
<dbReference type="HGNC" id="HGNC:16632">
    <property type="gene designation" value="MRPS31"/>
</dbReference>
<dbReference type="HPA" id="ENSG00000102738">
    <property type="expression patterns" value="Low tissue specificity"/>
</dbReference>
<dbReference type="MIM" id="611992">
    <property type="type" value="gene"/>
</dbReference>
<dbReference type="neXtProt" id="NX_Q92665"/>
<dbReference type="OpenTargets" id="ENSG00000102738"/>
<dbReference type="PharmGKB" id="PA31019"/>
<dbReference type="VEuPathDB" id="HostDB:ENSG00000102738"/>
<dbReference type="eggNOG" id="ENOG502QSX9">
    <property type="taxonomic scope" value="Eukaryota"/>
</dbReference>
<dbReference type="GeneTree" id="ENSGT00390000010017"/>
<dbReference type="HOGENOM" id="CLU_052666_0_0_1"/>
<dbReference type="InParanoid" id="Q92665"/>
<dbReference type="OMA" id="EGYDNYP"/>
<dbReference type="OrthoDB" id="5989925at2759"/>
<dbReference type="PAN-GO" id="Q92665">
    <property type="GO annotations" value="0 GO annotations based on evolutionary models"/>
</dbReference>
<dbReference type="PhylomeDB" id="Q92665"/>
<dbReference type="TreeFam" id="TF324305"/>
<dbReference type="PathwayCommons" id="Q92665"/>
<dbReference type="Reactome" id="R-HSA-5368286">
    <property type="pathway name" value="Mitochondrial translation initiation"/>
</dbReference>
<dbReference type="Reactome" id="R-HSA-5389840">
    <property type="pathway name" value="Mitochondrial translation elongation"/>
</dbReference>
<dbReference type="Reactome" id="R-HSA-5419276">
    <property type="pathway name" value="Mitochondrial translation termination"/>
</dbReference>
<dbReference type="SignaLink" id="Q92665"/>
<dbReference type="SIGNOR" id="Q92665"/>
<dbReference type="BioGRID-ORCS" id="10240">
    <property type="hits" value="306 hits in 1164 CRISPR screens"/>
</dbReference>
<dbReference type="CD-CODE" id="5965E019">
    <property type="entry name" value="mtRNA granule"/>
</dbReference>
<dbReference type="ChiTaRS" id="MRPS31">
    <property type="organism name" value="human"/>
</dbReference>
<dbReference type="GenomeRNAi" id="10240"/>
<dbReference type="Pharos" id="Q92665">
    <property type="development level" value="Tdark"/>
</dbReference>
<dbReference type="PRO" id="PR:Q92665"/>
<dbReference type="Proteomes" id="UP000005640">
    <property type="component" value="Chromosome 13"/>
</dbReference>
<dbReference type="RNAct" id="Q92665">
    <property type="molecule type" value="protein"/>
</dbReference>
<dbReference type="Bgee" id="ENSG00000102738">
    <property type="expression patterns" value="Expressed in bronchial epithelial cell and 208 other cell types or tissues"/>
</dbReference>
<dbReference type="GO" id="GO:0005743">
    <property type="term" value="C:mitochondrial inner membrane"/>
    <property type="evidence" value="ECO:0000304"/>
    <property type="project" value="Reactome"/>
</dbReference>
<dbReference type="GO" id="GO:0005763">
    <property type="term" value="C:mitochondrial small ribosomal subunit"/>
    <property type="evidence" value="ECO:0000303"/>
    <property type="project" value="ComplexPortal"/>
</dbReference>
<dbReference type="GO" id="GO:0005739">
    <property type="term" value="C:mitochondrion"/>
    <property type="evidence" value="ECO:0000314"/>
    <property type="project" value="HPA"/>
</dbReference>
<dbReference type="GO" id="GO:0005730">
    <property type="term" value="C:nucleolus"/>
    <property type="evidence" value="ECO:0000314"/>
    <property type="project" value="HPA"/>
</dbReference>
<dbReference type="GO" id="GO:0019904">
    <property type="term" value="F:protein domain specific binding"/>
    <property type="evidence" value="ECO:0000353"/>
    <property type="project" value="UniProtKB"/>
</dbReference>
<dbReference type="GO" id="GO:0003723">
    <property type="term" value="F:RNA binding"/>
    <property type="evidence" value="ECO:0007005"/>
    <property type="project" value="UniProtKB"/>
</dbReference>
<dbReference type="GO" id="GO:0003735">
    <property type="term" value="F:structural constituent of ribosome"/>
    <property type="evidence" value="ECO:0007669"/>
    <property type="project" value="InterPro"/>
</dbReference>
<dbReference type="GO" id="GO:0032543">
    <property type="term" value="P:mitochondrial translation"/>
    <property type="evidence" value="ECO:0000303"/>
    <property type="project" value="ComplexPortal"/>
</dbReference>
<dbReference type="InterPro" id="IPR026299">
    <property type="entry name" value="MRP-S31"/>
</dbReference>
<dbReference type="PANTHER" id="PTHR13231">
    <property type="entry name" value="MITOCHONDRIAL RIBOSOMAL PROTEIN S31"/>
    <property type="match status" value="1"/>
</dbReference>
<dbReference type="PANTHER" id="PTHR13231:SF3">
    <property type="entry name" value="SMALL RIBOSOMAL SUBUNIT PROTEIN MS31"/>
    <property type="match status" value="1"/>
</dbReference>
<dbReference type="Pfam" id="PF15433">
    <property type="entry name" value="MRP-S31"/>
    <property type="match status" value="1"/>
</dbReference>
<reference key="1">
    <citation type="journal article" date="1996" name="J. Clin. Invest.">
        <title>Imogen 38: a novel 38-kD islet mitochondrial autoantigen recognized by T cells from a newly diagnosed type 1 diabetic patient.</title>
        <authorList>
            <person name="Arden S.D."/>
            <person name="Roep B.O."/>
            <person name="Neophytou P.I."/>
            <person name="Usac E.F."/>
            <person name="Duinkerken G."/>
            <person name="de Vries R.R.P."/>
            <person name="Hutton J.C."/>
        </authorList>
    </citation>
    <scope>NUCLEOTIDE SEQUENCE [MRNA]</scope>
    <scope>VARIANT ASN-279</scope>
    <source>
        <tissue>Skin</tissue>
    </source>
</reference>
<reference key="2">
    <citation type="journal article" date="2004" name="Nat. Genet.">
        <title>Complete sequencing and characterization of 21,243 full-length human cDNAs.</title>
        <authorList>
            <person name="Ota T."/>
            <person name="Suzuki Y."/>
            <person name="Nishikawa T."/>
            <person name="Otsuki T."/>
            <person name="Sugiyama T."/>
            <person name="Irie R."/>
            <person name="Wakamatsu A."/>
            <person name="Hayashi K."/>
            <person name="Sato H."/>
            <person name="Nagai K."/>
            <person name="Kimura K."/>
            <person name="Makita H."/>
            <person name="Sekine M."/>
            <person name="Obayashi M."/>
            <person name="Nishi T."/>
            <person name="Shibahara T."/>
            <person name="Tanaka T."/>
            <person name="Ishii S."/>
            <person name="Yamamoto J."/>
            <person name="Saito K."/>
            <person name="Kawai Y."/>
            <person name="Isono Y."/>
            <person name="Nakamura Y."/>
            <person name="Nagahari K."/>
            <person name="Murakami K."/>
            <person name="Yasuda T."/>
            <person name="Iwayanagi T."/>
            <person name="Wagatsuma M."/>
            <person name="Shiratori A."/>
            <person name="Sudo H."/>
            <person name="Hosoiri T."/>
            <person name="Kaku Y."/>
            <person name="Kodaira H."/>
            <person name="Kondo H."/>
            <person name="Sugawara M."/>
            <person name="Takahashi M."/>
            <person name="Kanda K."/>
            <person name="Yokoi T."/>
            <person name="Furuya T."/>
            <person name="Kikkawa E."/>
            <person name="Omura Y."/>
            <person name="Abe K."/>
            <person name="Kamihara K."/>
            <person name="Katsuta N."/>
            <person name="Sato K."/>
            <person name="Tanikawa M."/>
            <person name="Yamazaki M."/>
            <person name="Ninomiya K."/>
            <person name="Ishibashi T."/>
            <person name="Yamashita H."/>
            <person name="Murakawa K."/>
            <person name="Fujimori K."/>
            <person name="Tanai H."/>
            <person name="Kimata M."/>
            <person name="Watanabe M."/>
            <person name="Hiraoka S."/>
            <person name="Chiba Y."/>
            <person name="Ishida S."/>
            <person name="Ono Y."/>
            <person name="Takiguchi S."/>
            <person name="Watanabe S."/>
            <person name="Yosida M."/>
            <person name="Hotuta T."/>
            <person name="Kusano J."/>
            <person name="Kanehori K."/>
            <person name="Takahashi-Fujii A."/>
            <person name="Hara H."/>
            <person name="Tanase T.-O."/>
            <person name="Nomura Y."/>
            <person name="Togiya S."/>
            <person name="Komai F."/>
            <person name="Hara R."/>
            <person name="Takeuchi K."/>
            <person name="Arita M."/>
            <person name="Imose N."/>
            <person name="Musashino K."/>
            <person name="Yuuki H."/>
            <person name="Oshima A."/>
            <person name="Sasaki N."/>
            <person name="Aotsuka S."/>
            <person name="Yoshikawa Y."/>
            <person name="Matsunawa H."/>
            <person name="Ichihara T."/>
            <person name="Shiohata N."/>
            <person name="Sano S."/>
            <person name="Moriya S."/>
            <person name="Momiyama H."/>
            <person name="Satoh N."/>
            <person name="Takami S."/>
            <person name="Terashima Y."/>
            <person name="Suzuki O."/>
            <person name="Nakagawa S."/>
            <person name="Senoh A."/>
            <person name="Mizoguchi H."/>
            <person name="Goto Y."/>
            <person name="Shimizu F."/>
            <person name="Wakebe H."/>
            <person name="Hishigaki H."/>
            <person name="Watanabe T."/>
            <person name="Sugiyama A."/>
            <person name="Takemoto M."/>
            <person name="Kawakami B."/>
            <person name="Yamazaki M."/>
            <person name="Watanabe K."/>
            <person name="Kumagai A."/>
            <person name="Itakura S."/>
            <person name="Fukuzumi Y."/>
            <person name="Fujimori Y."/>
            <person name="Komiyama M."/>
            <person name="Tashiro H."/>
            <person name="Tanigami A."/>
            <person name="Fujiwara T."/>
            <person name="Ono T."/>
            <person name="Yamada K."/>
            <person name="Fujii Y."/>
            <person name="Ozaki K."/>
            <person name="Hirao M."/>
            <person name="Ohmori Y."/>
            <person name="Kawabata A."/>
            <person name="Hikiji T."/>
            <person name="Kobatake N."/>
            <person name="Inagaki H."/>
            <person name="Ikema Y."/>
            <person name="Okamoto S."/>
            <person name="Okitani R."/>
            <person name="Kawakami T."/>
            <person name="Noguchi S."/>
            <person name="Itoh T."/>
            <person name="Shigeta K."/>
            <person name="Senba T."/>
            <person name="Matsumura K."/>
            <person name="Nakajima Y."/>
            <person name="Mizuno T."/>
            <person name="Morinaga M."/>
            <person name="Sasaki M."/>
            <person name="Togashi T."/>
            <person name="Oyama M."/>
            <person name="Hata H."/>
            <person name="Watanabe M."/>
            <person name="Komatsu T."/>
            <person name="Mizushima-Sugano J."/>
            <person name="Satoh T."/>
            <person name="Shirai Y."/>
            <person name="Takahashi Y."/>
            <person name="Nakagawa K."/>
            <person name="Okumura K."/>
            <person name="Nagase T."/>
            <person name="Nomura N."/>
            <person name="Kikuchi H."/>
            <person name="Masuho Y."/>
            <person name="Yamashita R."/>
            <person name="Nakai K."/>
            <person name="Yada T."/>
            <person name="Nakamura Y."/>
            <person name="Ohara O."/>
            <person name="Isogai T."/>
            <person name="Sugano S."/>
        </authorList>
    </citation>
    <scope>NUCLEOTIDE SEQUENCE [LARGE SCALE MRNA]</scope>
    <source>
        <tissue>Heart</tissue>
    </source>
</reference>
<reference key="3">
    <citation type="journal article" date="2004" name="Nature">
        <title>The DNA sequence and analysis of human chromosome 13.</title>
        <authorList>
            <person name="Dunham A."/>
            <person name="Matthews L.H."/>
            <person name="Burton J."/>
            <person name="Ashurst J.L."/>
            <person name="Howe K.L."/>
            <person name="Ashcroft K.J."/>
            <person name="Beare D.M."/>
            <person name="Burford D.C."/>
            <person name="Hunt S.E."/>
            <person name="Griffiths-Jones S."/>
            <person name="Jones M.C."/>
            <person name="Keenan S.J."/>
            <person name="Oliver K."/>
            <person name="Scott C.E."/>
            <person name="Ainscough R."/>
            <person name="Almeida J.P."/>
            <person name="Ambrose K.D."/>
            <person name="Andrews D.T."/>
            <person name="Ashwell R.I.S."/>
            <person name="Babbage A.K."/>
            <person name="Bagguley C.L."/>
            <person name="Bailey J."/>
            <person name="Bannerjee R."/>
            <person name="Barlow K.F."/>
            <person name="Bates K."/>
            <person name="Beasley H."/>
            <person name="Bird C.P."/>
            <person name="Bray-Allen S."/>
            <person name="Brown A.J."/>
            <person name="Brown J.Y."/>
            <person name="Burrill W."/>
            <person name="Carder C."/>
            <person name="Carter N.P."/>
            <person name="Chapman J.C."/>
            <person name="Clamp M.E."/>
            <person name="Clark S.Y."/>
            <person name="Clarke G."/>
            <person name="Clee C.M."/>
            <person name="Clegg S.C."/>
            <person name="Cobley V."/>
            <person name="Collins J.E."/>
            <person name="Corby N."/>
            <person name="Coville G.J."/>
            <person name="Deloukas P."/>
            <person name="Dhami P."/>
            <person name="Dunham I."/>
            <person name="Dunn M."/>
            <person name="Earthrowl M.E."/>
            <person name="Ellington A.G."/>
            <person name="Faulkner L."/>
            <person name="Frankish A.G."/>
            <person name="Frankland J."/>
            <person name="French L."/>
            <person name="Garner P."/>
            <person name="Garnett J."/>
            <person name="Gilbert J.G.R."/>
            <person name="Gilson C.J."/>
            <person name="Ghori J."/>
            <person name="Grafham D.V."/>
            <person name="Gribble S.M."/>
            <person name="Griffiths C."/>
            <person name="Hall R.E."/>
            <person name="Hammond S."/>
            <person name="Harley J.L."/>
            <person name="Hart E.A."/>
            <person name="Heath P.D."/>
            <person name="Howden P.J."/>
            <person name="Huckle E.J."/>
            <person name="Hunt P.J."/>
            <person name="Hunt A.R."/>
            <person name="Johnson C."/>
            <person name="Johnson D."/>
            <person name="Kay M."/>
            <person name="Kimberley A.M."/>
            <person name="King A."/>
            <person name="Laird G.K."/>
            <person name="Langford C.J."/>
            <person name="Lawlor S."/>
            <person name="Leongamornlert D.A."/>
            <person name="Lloyd D.M."/>
            <person name="Lloyd C."/>
            <person name="Loveland J.E."/>
            <person name="Lovell J."/>
            <person name="Martin S."/>
            <person name="Mashreghi-Mohammadi M."/>
            <person name="McLaren S.J."/>
            <person name="McMurray A."/>
            <person name="Milne S."/>
            <person name="Moore M.J.F."/>
            <person name="Nickerson T."/>
            <person name="Palmer S.A."/>
            <person name="Pearce A.V."/>
            <person name="Peck A.I."/>
            <person name="Pelan S."/>
            <person name="Phillimore B."/>
            <person name="Porter K.M."/>
            <person name="Rice C.M."/>
            <person name="Searle S."/>
            <person name="Sehra H.K."/>
            <person name="Shownkeen R."/>
            <person name="Skuce C.D."/>
            <person name="Smith M."/>
            <person name="Steward C.A."/>
            <person name="Sycamore N."/>
            <person name="Tester J."/>
            <person name="Thomas D.W."/>
            <person name="Tracey A."/>
            <person name="Tromans A."/>
            <person name="Tubby B."/>
            <person name="Wall M."/>
            <person name="Wallis J.M."/>
            <person name="West A.P."/>
            <person name="Whitehead S.L."/>
            <person name="Willey D.L."/>
            <person name="Wilming L."/>
            <person name="Wray P.W."/>
            <person name="Wright M.W."/>
            <person name="Young L."/>
            <person name="Coulson A."/>
            <person name="Durbin R.M."/>
            <person name="Hubbard T."/>
            <person name="Sulston J.E."/>
            <person name="Beck S."/>
            <person name="Bentley D.R."/>
            <person name="Rogers J."/>
            <person name="Ross M.T."/>
        </authorList>
    </citation>
    <scope>NUCLEOTIDE SEQUENCE [LARGE SCALE GENOMIC DNA]</scope>
</reference>
<reference key="4">
    <citation type="submission" date="2005-07" db="EMBL/GenBank/DDBJ databases">
        <authorList>
            <person name="Mural R.J."/>
            <person name="Istrail S."/>
            <person name="Sutton G.G."/>
            <person name="Florea L."/>
            <person name="Halpern A.L."/>
            <person name="Mobarry C.M."/>
            <person name="Lippert R."/>
            <person name="Walenz B."/>
            <person name="Shatkay H."/>
            <person name="Dew I."/>
            <person name="Miller J.R."/>
            <person name="Flanigan M.J."/>
            <person name="Edwards N.J."/>
            <person name="Bolanos R."/>
            <person name="Fasulo D."/>
            <person name="Halldorsson B.V."/>
            <person name="Hannenhalli S."/>
            <person name="Turner R."/>
            <person name="Yooseph S."/>
            <person name="Lu F."/>
            <person name="Nusskern D.R."/>
            <person name="Shue B.C."/>
            <person name="Zheng X.H."/>
            <person name="Zhong F."/>
            <person name="Delcher A.L."/>
            <person name="Huson D.H."/>
            <person name="Kravitz S.A."/>
            <person name="Mouchard L."/>
            <person name="Reinert K."/>
            <person name="Remington K.A."/>
            <person name="Clark A.G."/>
            <person name="Waterman M.S."/>
            <person name="Eichler E.E."/>
            <person name="Adams M.D."/>
            <person name="Hunkapiller M.W."/>
            <person name="Myers E.W."/>
            <person name="Venter J.C."/>
        </authorList>
    </citation>
    <scope>NUCLEOTIDE SEQUENCE [LARGE SCALE GENOMIC DNA]</scope>
</reference>
<reference key="5">
    <citation type="journal article" date="2004" name="Genome Res.">
        <title>The status, quality, and expansion of the NIH full-length cDNA project: the Mammalian Gene Collection (MGC).</title>
        <authorList>
            <consortium name="The MGC Project Team"/>
        </authorList>
    </citation>
    <scope>NUCLEOTIDE SEQUENCE [LARGE SCALE MRNA]</scope>
    <source>
        <tissue>Testis</tissue>
    </source>
</reference>
<reference evidence="7" key="6">
    <citation type="journal article" date="2001" name="J. Biol. Chem.">
        <title>The small subunit of the mammalian mitochondrial ribosome: identification of the full complement of ribosomal proteins present.</title>
        <authorList>
            <person name="Koc E.C."/>
            <person name="Burkhart W."/>
            <person name="Blackburn K."/>
            <person name="Moseley A."/>
            <person name="Spremulli L.L."/>
        </authorList>
    </citation>
    <scope>IDENTIFICATION</scope>
</reference>
<reference key="7">
    <citation type="journal article" date="2011" name="BMC Syst. Biol.">
        <title>Initial characterization of the human central proteome.</title>
        <authorList>
            <person name="Burkard T.R."/>
            <person name="Planyavsky M."/>
            <person name="Kaupe I."/>
            <person name="Breitwieser F.P."/>
            <person name="Buerckstuemmer T."/>
            <person name="Bennett K.L."/>
            <person name="Superti-Furga G."/>
            <person name="Colinge J."/>
        </authorList>
    </citation>
    <scope>IDENTIFICATION BY MASS SPECTROMETRY [LARGE SCALE ANALYSIS]</scope>
</reference>
<reference key="8">
    <citation type="journal article" date="2014" name="J. Proteomics">
        <title>An enzyme assisted RP-RPLC approach for in-depth analysis of human liver phosphoproteome.</title>
        <authorList>
            <person name="Bian Y."/>
            <person name="Song C."/>
            <person name="Cheng K."/>
            <person name="Dong M."/>
            <person name="Wang F."/>
            <person name="Huang J."/>
            <person name="Sun D."/>
            <person name="Wang L."/>
            <person name="Ye M."/>
            <person name="Zou H."/>
        </authorList>
    </citation>
    <scope>IDENTIFICATION BY MASS SPECTROMETRY [LARGE SCALE ANALYSIS]</scope>
    <source>
        <tissue>Liver</tissue>
    </source>
</reference>
<reference key="9">
    <citation type="journal article" date="2015" name="Proteomics">
        <title>N-terminome analysis of the human mitochondrial proteome.</title>
        <authorList>
            <person name="Vaca Jacome A.S."/>
            <person name="Rabilloud T."/>
            <person name="Schaeffer-Reiss C."/>
            <person name="Rompais M."/>
            <person name="Ayoub D."/>
            <person name="Lane L."/>
            <person name="Bairoch A."/>
            <person name="Van Dorsselaer A."/>
            <person name="Carapito C."/>
        </authorList>
    </citation>
    <scope>IDENTIFICATION BY MASS SPECTROMETRY [LARGE SCALE ANALYSIS]</scope>
</reference>
<reference key="10">
    <citation type="journal article" date="2015" name="Science">
        <title>Ribosome. The structure of the human mitochondrial ribosome.</title>
        <authorList>
            <person name="Amunts A."/>
            <person name="Brown A."/>
            <person name="Toots J."/>
            <person name="Scheres S.H."/>
            <person name="Ramakrishnan V."/>
        </authorList>
    </citation>
    <scope>STRUCTURE BY ELECTRON MICROSCOPY (3.50 ANGSTROMS)</scope>
    <scope>SUBUNIT</scope>
</reference>
<gene>
    <name type="primary">MRPS31</name>
    <name type="synonym">IMOGN38</name>
</gene>